<protein>
    <recommendedName>
        <fullName evidence="6">RxLR effector protein PITG_15679</fullName>
        <ecNumber evidence="7">3.6.1.-</ecNumber>
    </recommendedName>
</protein>
<keyword id="KW-1035">Host cytoplasm</keyword>
<keyword id="KW-1048">Host nucleus</keyword>
<keyword id="KW-0378">Hydrolase</keyword>
<keyword id="KW-0479">Metal-binding</keyword>
<keyword id="KW-1185">Reference proteome</keyword>
<keyword id="KW-0964">Secreted</keyword>
<keyword id="KW-0732">Signal</keyword>
<keyword id="KW-0843">Virulence</keyword>
<reference key="1">
    <citation type="journal article" date="2009" name="Nature">
        <title>Genome sequence and analysis of the Irish potato famine pathogen Phytophthora infestans.</title>
        <authorList>
            <consortium name="The Broad Institute Genome Sequencing Platform"/>
            <person name="Haas B.J."/>
            <person name="Kamoun S."/>
            <person name="Zody M.C."/>
            <person name="Jiang R.H."/>
            <person name="Handsaker R.E."/>
            <person name="Cano L.M."/>
            <person name="Grabherr M."/>
            <person name="Kodira C.D."/>
            <person name="Raffaele S."/>
            <person name="Torto-Alalibo T."/>
            <person name="Bozkurt T.O."/>
            <person name="Ah-Fong A.M."/>
            <person name="Alvarado L."/>
            <person name="Anderson V.L."/>
            <person name="Armstrong M.R."/>
            <person name="Avrova A."/>
            <person name="Baxter L."/>
            <person name="Beynon J."/>
            <person name="Boevink P.C."/>
            <person name="Bollmann S.R."/>
            <person name="Bos J.I."/>
            <person name="Bulone V."/>
            <person name="Cai G."/>
            <person name="Cakir C."/>
            <person name="Carrington J.C."/>
            <person name="Chawner M."/>
            <person name="Conti L."/>
            <person name="Costanzo S."/>
            <person name="Ewan R."/>
            <person name="Fahlgren N."/>
            <person name="Fischbach M.A."/>
            <person name="Fugelstad J."/>
            <person name="Gilroy E.M."/>
            <person name="Gnerre S."/>
            <person name="Green P.J."/>
            <person name="Grenville-Briggs L.J."/>
            <person name="Griffith J."/>
            <person name="Grunwald N.J."/>
            <person name="Horn K."/>
            <person name="Horner N.R."/>
            <person name="Hu C.H."/>
            <person name="Huitema E."/>
            <person name="Jeong D.H."/>
            <person name="Jones A.M."/>
            <person name="Jones J.D."/>
            <person name="Jones R.W."/>
            <person name="Karlsson E.K."/>
            <person name="Kunjeti S.G."/>
            <person name="Lamour K."/>
            <person name="Liu Z."/>
            <person name="Ma L."/>
            <person name="Maclean D."/>
            <person name="Chibucos M.C."/>
            <person name="McDonald H."/>
            <person name="McWalters J."/>
            <person name="Meijer H.J."/>
            <person name="Morgan W."/>
            <person name="Morris P.F."/>
            <person name="Munro C.A."/>
            <person name="O'Neill K."/>
            <person name="Ospina-Giraldo M."/>
            <person name="Pinzon A."/>
            <person name="Pritchard L."/>
            <person name="Ramsahoye B."/>
            <person name="Ren Q."/>
            <person name="Restrepo S."/>
            <person name="Roy S."/>
            <person name="Sadanandom A."/>
            <person name="Savidor A."/>
            <person name="Schornack S."/>
            <person name="Schwartz D.C."/>
            <person name="Schumann U.D."/>
            <person name="Schwessinger B."/>
            <person name="Seyer L."/>
            <person name="Sharpe T."/>
            <person name="Silvar C."/>
            <person name="Song J."/>
            <person name="Studholme D.J."/>
            <person name="Sykes S."/>
            <person name="Thines M."/>
            <person name="van de Vondervoort P.J."/>
            <person name="Phuntumart V."/>
            <person name="Wawra S."/>
            <person name="Weide R."/>
            <person name="Win J."/>
            <person name="Young C."/>
            <person name="Zhou S."/>
            <person name="Fry W."/>
            <person name="Meyers B.C."/>
            <person name="van West P."/>
            <person name="Ristaino J."/>
            <person name="Govers F."/>
            <person name="Birch P.R."/>
            <person name="Whisson S.C."/>
            <person name="Judelson H.S."/>
            <person name="Nusbaum C."/>
        </authorList>
    </citation>
    <scope>NUCLEOTIDE SEQUENCE [LARGE SCALE GENOMIC DNA]</scope>
    <scope>INDUCTION</scope>
    <source>
        <strain>T30-4</strain>
    </source>
</reference>
<reference key="2">
    <citation type="journal article" date="2017" name="Front. Plant Sci.">
        <title>Conserved RXLR effector genes of Phytophthora infestans expressed at the early stage of potato infection are suppressive to host defense.</title>
        <authorList>
            <person name="Yin J."/>
            <person name="Gu B."/>
            <person name="Huang G."/>
            <person name="Tian Y."/>
            <person name="Quan J."/>
            <person name="Lindqvist-Kreuze H."/>
            <person name="Shan W."/>
        </authorList>
    </citation>
    <scope>INDUCTION</scope>
    <scope>DOMAIN</scope>
</reference>
<reference key="3">
    <citation type="journal article" date="2019" name="J. Exp. Bot.">
        <title>Phytophthora infestans RXLR effectors act in concert at diverse subcellular locations to enhance host colonization.</title>
        <authorList>
            <person name="Wang S."/>
            <person name="McLellan H."/>
            <person name="Bukharova T."/>
            <person name="He Q."/>
            <person name="Murphy F."/>
            <person name="Shi J."/>
            <person name="Sun S."/>
            <person name="van Weymers P."/>
            <person name="Ren Y."/>
            <person name="Thilliez G."/>
            <person name="Wang H."/>
            <person name="Chen X."/>
            <person name="Engelhardt S."/>
            <person name="Vleeshouwers V."/>
            <person name="Gilroy E.M."/>
            <person name="Whisson S.C."/>
            <person name="Hein I."/>
            <person name="Wang X."/>
            <person name="Tian Z."/>
            <person name="Birch P.R.J."/>
            <person name="Boevink P.C."/>
        </authorList>
    </citation>
    <scope>FUNCTION</scope>
    <scope>SUBCELLULAR LOCATION</scope>
</reference>
<evidence type="ECO:0000255" key="1"/>
<evidence type="ECO:0000255" key="2">
    <source>
        <dbReference type="PROSITE-ProRule" id="PRU00794"/>
    </source>
</evidence>
<evidence type="ECO:0000269" key="3">
    <source>
    </source>
</evidence>
<evidence type="ECO:0000269" key="4">
    <source>
    </source>
</evidence>
<evidence type="ECO:0000269" key="5">
    <source>
    </source>
</evidence>
<evidence type="ECO:0000303" key="6">
    <source>
    </source>
</evidence>
<evidence type="ECO:0000305" key="7"/>
<evidence type="ECO:0000305" key="8">
    <source>
    </source>
</evidence>
<sequence length="271" mass="29615">MKVLQLIALTALVSSCVAASAADPSGLAKTKSDVDVLSRVLADHEQTNRSLRRYDLEGLDSVNSNREERNSITMVDDVVTKASGLVDDVMGKTDDVVGKAGQFGKVPTKLRDVATKNMDKIKEMTARSALVKTLTGRYDYAEKLSLSALKQLDDIEKVRAVDIKKGIKGSKETPDGMRRVIEPFEGMKVAPKKFLESHVGRADQRYGKDGSRLLSANVVMRLNDKGEKQILLISSSNPKKGDFLLPKGGWDKGEDVKKAALREVIEEGGVR</sequence>
<proteinExistence type="evidence at transcript level"/>
<accession>D0NSB3</accession>
<gene>
    <name type="ORF">PITG_15679</name>
</gene>
<comment type="function">
    <text evidence="5">Effector that enhances P.infestans colonization of Nicotiana benthamiana leaves.</text>
</comment>
<comment type="subcellular location">
    <subcellularLocation>
        <location evidence="5">Secreted</location>
    </subcellularLocation>
    <subcellularLocation>
        <location evidence="5">Host cytoplasm</location>
    </subcellularLocation>
    <subcellularLocation>
        <location evidence="5">Host nucleus</location>
    </subcellularLocation>
</comment>
<comment type="induction">
    <text evidence="3 4">Expression is induced during host plant infection.</text>
</comment>
<comment type="domain">
    <text evidence="8">The RxLR-dEER motif acts to carry the protein into the host cell cytoplasm through binding to cell surface phosphatidylinositol-3-phosphate.</text>
</comment>
<comment type="similarity">
    <text evidence="7">In the N-terminal section; belongs to the RxLR effector family.</text>
</comment>
<comment type="similarity">
    <text evidence="7">In the C-terminal section; belongs to the Nudix hydrolase family.</text>
</comment>
<name>RXLRT_PHYIT</name>
<dbReference type="EC" id="3.6.1.-" evidence="7"/>
<dbReference type="EMBL" id="DS028157">
    <property type="protein sequence ID" value="EEY64458.1"/>
    <property type="molecule type" value="Genomic_DNA"/>
</dbReference>
<dbReference type="RefSeq" id="XP_002897961.1">
    <property type="nucleotide sequence ID" value="XM_002897915.1"/>
</dbReference>
<dbReference type="SMR" id="D0NSB3"/>
<dbReference type="STRING" id="403677.D0NSB3"/>
<dbReference type="EnsemblProtists" id="PITG_15679T0">
    <property type="protein sequence ID" value="PITG_15679T0"/>
    <property type="gene ID" value="PITG_15679"/>
</dbReference>
<dbReference type="GeneID" id="9475430"/>
<dbReference type="KEGG" id="pif:PITG_15679"/>
<dbReference type="VEuPathDB" id="FungiDB:PITG_15679"/>
<dbReference type="eggNOG" id="KOG2839">
    <property type="taxonomic scope" value="Eukaryota"/>
</dbReference>
<dbReference type="HOGENOM" id="CLU_069948_1_0_1"/>
<dbReference type="InParanoid" id="D0NSB3"/>
<dbReference type="OMA" id="MHMDAKI"/>
<dbReference type="OrthoDB" id="128634at2759"/>
<dbReference type="Proteomes" id="UP000006643">
    <property type="component" value="Partially assembled WGS sequence"/>
</dbReference>
<dbReference type="GO" id="GO:0005737">
    <property type="term" value="C:cytoplasm"/>
    <property type="evidence" value="ECO:0007669"/>
    <property type="project" value="TreeGrafter"/>
</dbReference>
<dbReference type="GO" id="GO:0005576">
    <property type="term" value="C:extracellular region"/>
    <property type="evidence" value="ECO:0007669"/>
    <property type="project" value="UniProtKB-SubCell"/>
</dbReference>
<dbReference type="GO" id="GO:0030430">
    <property type="term" value="C:host cell cytoplasm"/>
    <property type="evidence" value="ECO:0007669"/>
    <property type="project" value="UniProtKB-SubCell"/>
</dbReference>
<dbReference type="GO" id="GO:0042025">
    <property type="term" value="C:host cell nucleus"/>
    <property type="evidence" value="ECO:0007669"/>
    <property type="project" value="UniProtKB-SubCell"/>
</dbReference>
<dbReference type="GO" id="GO:0005634">
    <property type="term" value="C:nucleus"/>
    <property type="evidence" value="ECO:0007669"/>
    <property type="project" value="TreeGrafter"/>
</dbReference>
<dbReference type="GO" id="GO:0016787">
    <property type="term" value="F:hydrolase activity"/>
    <property type="evidence" value="ECO:0007669"/>
    <property type="project" value="UniProtKB-KW"/>
</dbReference>
<dbReference type="GO" id="GO:0046872">
    <property type="term" value="F:metal ion binding"/>
    <property type="evidence" value="ECO:0007669"/>
    <property type="project" value="UniProtKB-KW"/>
</dbReference>
<dbReference type="Gene3D" id="3.90.79.10">
    <property type="entry name" value="Nucleoside Triphosphate Pyrophosphohydrolase"/>
    <property type="match status" value="1"/>
</dbReference>
<dbReference type="InterPro" id="IPR015797">
    <property type="entry name" value="NUDIX_hydrolase-like_dom_sf"/>
</dbReference>
<dbReference type="InterPro" id="IPR020084">
    <property type="entry name" value="NUDIX_hydrolase_CS"/>
</dbReference>
<dbReference type="InterPro" id="IPR000086">
    <property type="entry name" value="NUDIX_hydrolase_dom"/>
</dbReference>
<dbReference type="PANTHER" id="PTHR12629">
    <property type="entry name" value="DIPHOSPHOINOSITOL POLYPHOSPHATE PHOSPHOHYDROLASE"/>
    <property type="match status" value="1"/>
</dbReference>
<dbReference type="PANTHER" id="PTHR12629:SF0">
    <property type="entry name" value="DIPHOSPHOINOSITOL-POLYPHOSPHATE DIPHOSPHATASE"/>
    <property type="match status" value="1"/>
</dbReference>
<dbReference type="Pfam" id="PF00293">
    <property type="entry name" value="NUDIX"/>
    <property type="match status" value="1"/>
</dbReference>
<dbReference type="SUPFAM" id="SSF55811">
    <property type="entry name" value="Nudix"/>
    <property type="match status" value="1"/>
</dbReference>
<dbReference type="PROSITE" id="PS51462">
    <property type="entry name" value="NUDIX"/>
    <property type="match status" value="1"/>
</dbReference>
<dbReference type="PROSITE" id="PS00893">
    <property type="entry name" value="NUDIX_BOX"/>
    <property type="match status" value="1"/>
</dbReference>
<feature type="signal peptide" evidence="1">
    <location>
        <begin position="1"/>
        <end position="18"/>
    </location>
</feature>
<feature type="chain" id="PRO_5003013620" description="RxLR effector protein PITG_15679">
    <location>
        <begin position="19"/>
        <end position="271"/>
    </location>
</feature>
<feature type="domain" description="Nudix hydrolase" evidence="2">
    <location>
        <begin position="212"/>
        <end position="271"/>
    </location>
</feature>
<feature type="short sequence motif" description="RxLR-dEER" evidence="8">
    <location>
        <begin position="49"/>
        <end position="69"/>
    </location>
</feature>
<feature type="short sequence motif" description="Nudix box" evidence="2">
    <location>
        <begin position="248"/>
        <end position="269"/>
    </location>
</feature>
<organism>
    <name type="scientific">Phytophthora infestans (strain T30-4)</name>
    <name type="common">Potato late blight agent</name>
    <dbReference type="NCBI Taxonomy" id="403677"/>
    <lineage>
        <taxon>Eukaryota</taxon>
        <taxon>Sar</taxon>
        <taxon>Stramenopiles</taxon>
        <taxon>Oomycota</taxon>
        <taxon>Peronosporales</taxon>
        <taxon>Peronosporaceae</taxon>
        <taxon>Phytophthora</taxon>
    </lineage>
</organism>